<protein>
    <recommendedName>
        <fullName>CDC42 small effector protein 2-A</fullName>
    </recommendedName>
</protein>
<dbReference type="EMBL" id="CR762307">
    <property type="protein sequence ID" value="CAJ82580.1"/>
    <property type="molecule type" value="mRNA"/>
</dbReference>
<dbReference type="EMBL" id="BC123961">
    <property type="protein sequence ID" value="AAI23962.1"/>
    <property type="molecule type" value="mRNA"/>
</dbReference>
<dbReference type="RefSeq" id="NP_001025494.1">
    <property type="nucleotide sequence ID" value="NM_001030323.2"/>
</dbReference>
<dbReference type="FunCoup" id="Q28EW5">
    <property type="interactions" value="1166"/>
</dbReference>
<dbReference type="STRING" id="8364.ENSXETP00000037864"/>
<dbReference type="PaxDb" id="8364-ENSXETP00000055897"/>
<dbReference type="DNASU" id="594909"/>
<dbReference type="GeneID" id="594909"/>
<dbReference type="KEGG" id="xtr:594909"/>
<dbReference type="CTD" id="56990"/>
<dbReference type="eggNOG" id="ENOG502S22R">
    <property type="taxonomic scope" value="Eukaryota"/>
</dbReference>
<dbReference type="HOGENOM" id="CLU_173417_1_0_1"/>
<dbReference type="InParanoid" id="Q28EW5"/>
<dbReference type="OMA" id="CCIGGQP"/>
<dbReference type="OrthoDB" id="5559822at2759"/>
<dbReference type="PhylomeDB" id="Q28EW5"/>
<dbReference type="TreeFam" id="TF323815"/>
<dbReference type="Proteomes" id="UP000008143">
    <property type="component" value="Chromosome 1"/>
</dbReference>
<dbReference type="Bgee" id="ENSXETG00000008962">
    <property type="expression patterns" value="Expressed in brain and 13 other cell types or tissues"/>
</dbReference>
<dbReference type="GO" id="GO:0005737">
    <property type="term" value="C:cytoplasm"/>
    <property type="evidence" value="ECO:0007669"/>
    <property type="project" value="UniProtKB-KW"/>
</dbReference>
<dbReference type="GO" id="GO:0005856">
    <property type="term" value="C:cytoskeleton"/>
    <property type="evidence" value="ECO:0007669"/>
    <property type="project" value="UniProtKB-SubCell"/>
</dbReference>
<dbReference type="GO" id="GO:0005886">
    <property type="term" value="C:plasma membrane"/>
    <property type="evidence" value="ECO:0000250"/>
    <property type="project" value="UniProtKB"/>
</dbReference>
<dbReference type="GO" id="GO:0031267">
    <property type="term" value="F:small GTPase binding"/>
    <property type="evidence" value="ECO:0007669"/>
    <property type="project" value="InterPro"/>
</dbReference>
<dbReference type="GO" id="GO:0008360">
    <property type="term" value="P:regulation of cell shape"/>
    <property type="evidence" value="ECO:0007669"/>
    <property type="project" value="UniProtKB-KW"/>
</dbReference>
<dbReference type="GO" id="GO:0035023">
    <property type="term" value="P:regulation of Rho protein signal transduction"/>
    <property type="evidence" value="ECO:0007669"/>
    <property type="project" value="InterPro"/>
</dbReference>
<dbReference type="GO" id="GO:0009966">
    <property type="term" value="P:regulation of signal transduction"/>
    <property type="evidence" value="ECO:0000250"/>
    <property type="project" value="UniProtKB"/>
</dbReference>
<dbReference type="CDD" id="cd00132">
    <property type="entry name" value="CRIB"/>
    <property type="match status" value="1"/>
</dbReference>
<dbReference type="FunFam" id="3.90.810.10:FF:000004">
    <property type="entry name" value="CDC42 small effector protein 2"/>
    <property type="match status" value="1"/>
</dbReference>
<dbReference type="Gene3D" id="3.90.810.10">
    <property type="entry name" value="CRIB domain"/>
    <property type="match status" value="1"/>
</dbReference>
<dbReference type="InterPro" id="IPR000095">
    <property type="entry name" value="CRIB_dom"/>
</dbReference>
<dbReference type="InterPro" id="IPR036936">
    <property type="entry name" value="CRIB_dom_sf"/>
</dbReference>
<dbReference type="InterPro" id="IPR039056">
    <property type="entry name" value="SPEC"/>
</dbReference>
<dbReference type="PANTHER" id="PTHR13502:SF4">
    <property type="entry name" value="CDC42 SMALL EFFECTOR PROTEIN 2"/>
    <property type="match status" value="1"/>
</dbReference>
<dbReference type="PANTHER" id="PTHR13502">
    <property type="entry name" value="CDC42 SMALL EFFECTOR PROTEIN HOMOLOG"/>
    <property type="match status" value="1"/>
</dbReference>
<dbReference type="Pfam" id="PF00786">
    <property type="entry name" value="PBD"/>
    <property type="match status" value="1"/>
</dbReference>
<dbReference type="PROSITE" id="PS50108">
    <property type="entry name" value="CRIB"/>
    <property type="match status" value="1"/>
</dbReference>
<name>C4S2A_XENTR</name>
<keyword id="KW-1003">Cell membrane</keyword>
<keyword id="KW-0133">Cell shape</keyword>
<keyword id="KW-0963">Cytoplasm</keyword>
<keyword id="KW-0206">Cytoskeleton</keyword>
<keyword id="KW-0449">Lipoprotein</keyword>
<keyword id="KW-0472">Membrane</keyword>
<keyword id="KW-0564">Palmitate</keyword>
<keyword id="KW-1185">Reference proteome</keyword>
<proteinExistence type="inferred from homology"/>
<evidence type="ECO:0000250" key="1"/>
<evidence type="ECO:0000255" key="2">
    <source>
        <dbReference type="PROSITE-ProRule" id="PRU00057"/>
    </source>
</evidence>
<evidence type="ECO:0000305" key="3"/>
<sequence>MSEFWLCFNCCIAEQPQPKRRRRIDRSMIGEPTNFVHTAHVGSGDLFSGMNSVSSIQNQMQSKGGYGGNMSANVQMQLVDTKAG</sequence>
<comment type="function">
    <text evidence="1">Probably involved in the organization of the actin cytoskeleton by acting downstream of CDC42, inducing actin filament assembly.</text>
</comment>
<comment type="subcellular location">
    <subcellularLocation>
        <location evidence="1">Cytoplasm</location>
        <location evidence="1">Cytoskeleton</location>
    </subcellularLocation>
    <subcellularLocation>
        <location evidence="1">Cell membrane</location>
        <topology evidence="1">Lipid-anchor</topology>
    </subcellularLocation>
</comment>
<comment type="similarity">
    <text evidence="3">Belongs to the CDC42SE/SPEC family.</text>
</comment>
<gene>
    <name type="primary">cdc42se2-A</name>
    <name type="ORF">TGas070o22.1</name>
</gene>
<organism>
    <name type="scientific">Xenopus tropicalis</name>
    <name type="common">Western clawed frog</name>
    <name type="synonym">Silurana tropicalis</name>
    <dbReference type="NCBI Taxonomy" id="8364"/>
    <lineage>
        <taxon>Eukaryota</taxon>
        <taxon>Metazoa</taxon>
        <taxon>Chordata</taxon>
        <taxon>Craniata</taxon>
        <taxon>Vertebrata</taxon>
        <taxon>Euteleostomi</taxon>
        <taxon>Amphibia</taxon>
        <taxon>Batrachia</taxon>
        <taxon>Anura</taxon>
        <taxon>Pipoidea</taxon>
        <taxon>Pipidae</taxon>
        <taxon>Xenopodinae</taxon>
        <taxon>Xenopus</taxon>
        <taxon>Silurana</taxon>
    </lineage>
</organism>
<feature type="chain" id="PRO_0000334647" description="CDC42 small effector protein 2-A">
    <location>
        <begin position="1"/>
        <end position="84"/>
    </location>
</feature>
<feature type="domain" description="CRIB" evidence="2">
    <location>
        <begin position="29"/>
        <end position="42"/>
    </location>
</feature>
<feature type="lipid moiety-binding region" description="S-palmitoyl cysteine" evidence="1">
    <location>
        <position position="10"/>
    </location>
</feature>
<feature type="lipid moiety-binding region" description="S-palmitoyl cysteine" evidence="1">
    <location>
        <position position="11"/>
    </location>
</feature>
<accession>Q28EW5</accession>
<reference key="1">
    <citation type="submission" date="2006-10" db="EMBL/GenBank/DDBJ databases">
        <authorList>
            <consortium name="Sanger Xenopus tropicalis EST/cDNA project"/>
        </authorList>
    </citation>
    <scope>NUCLEOTIDE SEQUENCE [LARGE SCALE MRNA]</scope>
    <source>
        <tissue>Gastrula</tissue>
    </source>
</reference>
<reference key="2">
    <citation type="submission" date="2006-09" db="EMBL/GenBank/DDBJ databases">
        <authorList>
            <consortium name="NIH - Xenopus Gene Collection (XGC) project"/>
        </authorList>
    </citation>
    <scope>NUCLEOTIDE SEQUENCE [LARGE SCALE MRNA]</scope>
    <source>
        <strain>N6</strain>
        <tissue>Skin</tissue>
    </source>
</reference>